<evidence type="ECO:0000255" key="1">
    <source>
        <dbReference type="HAMAP-Rule" id="MF_00251"/>
    </source>
</evidence>
<evidence type="ECO:0000305" key="2"/>
<gene>
    <name evidence="1" type="primary">rpmJ</name>
    <name type="ordered locus">SynWH7803_0414</name>
</gene>
<keyword id="KW-1185">Reference proteome</keyword>
<keyword id="KW-0687">Ribonucleoprotein</keyword>
<keyword id="KW-0689">Ribosomal protein</keyword>
<proteinExistence type="inferred from homology"/>
<dbReference type="EMBL" id="CT971583">
    <property type="protein sequence ID" value="CAK22840.1"/>
    <property type="molecule type" value="Genomic_DNA"/>
</dbReference>
<dbReference type="SMR" id="A5GIS5"/>
<dbReference type="STRING" id="32051.SynWH7803_0414"/>
<dbReference type="KEGG" id="syx:SynWH7803_0414"/>
<dbReference type="eggNOG" id="COG0257">
    <property type="taxonomic scope" value="Bacteria"/>
</dbReference>
<dbReference type="HOGENOM" id="CLU_135723_6_2_3"/>
<dbReference type="OrthoDB" id="9802520at2"/>
<dbReference type="Proteomes" id="UP000001566">
    <property type="component" value="Chromosome"/>
</dbReference>
<dbReference type="GO" id="GO:0005737">
    <property type="term" value="C:cytoplasm"/>
    <property type="evidence" value="ECO:0007669"/>
    <property type="project" value="UniProtKB-ARBA"/>
</dbReference>
<dbReference type="GO" id="GO:1990904">
    <property type="term" value="C:ribonucleoprotein complex"/>
    <property type="evidence" value="ECO:0007669"/>
    <property type="project" value="UniProtKB-KW"/>
</dbReference>
<dbReference type="GO" id="GO:0005840">
    <property type="term" value="C:ribosome"/>
    <property type="evidence" value="ECO:0007669"/>
    <property type="project" value="UniProtKB-KW"/>
</dbReference>
<dbReference type="GO" id="GO:0003735">
    <property type="term" value="F:structural constituent of ribosome"/>
    <property type="evidence" value="ECO:0007669"/>
    <property type="project" value="InterPro"/>
</dbReference>
<dbReference type="GO" id="GO:0006412">
    <property type="term" value="P:translation"/>
    <property type="evidence" value="ECO:0007669"/>
    <property type="project" value="UniProtKB-UniRule"/>
</dbReference>
<dbReference type="HAMAP" id="MF_00251">
    <property type="entry name" value="Ribosomal_bL36"/>
    <property type="match status" value="1"/>
</dbReference>
<dbReference type="InterPro" id="IPR000473">
    <property type="entry name" value="Ribosomal_bL36"/>
</dbReference>
<dbReference type="InterPro" id="IPR035977">
    <property type="entry name" value="Ribosomal_bL36_sp"/>
</dbReference>
<dbReference type="NCBIfam" id="TIGR01022">
    <property type="entry name" value="rpmJ_bact"/>
    <property type="match status" value="1"/>
</dbReference>
<dbReference type="PANTHER" id="PTHR42888">
    <property type="entry name" value="50S RIBOSOMAL PROTEIN L36, CHLOROPLASTIC"/>
    <property type="match status" value="1"/>
</dbReference>
<dbReference type="PANTHER" id="PTHR42888:SF1">
    <property type="entry name" value="LARGE RIBOSOMAL SUBUNIT PROTEIN BL36C"/>
    <property type="match status" value="1"/>
</dbReference>
<dbReference type="Pfam" id="PF00444">
    <property type="entry name" value="Ribosomal_L36"/>
    <property type="match status" value="1"/>
</dbReference>
<dbReference type="SUPFAM" id="SSF57840">
    <property type="entry name" value="Ribosomal protein L36"/>
    <property type="match status" value="1"/>
</dbReference>
<dbReference type="PROSITE" id="PS00828">
    <property type="entry name" value="RIBOSOMAL_L36"/>
    <property type="match status" value="1"/>
</dbReference>
<sequence length="37" mass="4407">MKVRASVKKMCDKCRVIRRHGRVMVICENPKHKQRQG</sequence>
<name>RL36_SYNPW</name>
<reference key="1">
    <citation type="submission" date="2006-05" db="EMBL/GenBank/DDBJ databases">
        <authorList>
            <consortium name="Genoscope"/>
        </authorList>
    </citation>
    <scope>NUCLEOTIDE SEQUENCE [LARGE SCALE GENOMIC DNA]</scope>
    <source>
        <strain>WH7803</strain>
    </source>
</reference>
<organism>
    <name type="scientific">Synechococcus sp. (strain WH7803)</name>
    <dbReference type="NCBI Taxonomy" id="32051"/>
    <lineage>
        <taxon>Bacteria</taxon>
        <taxon>Bacillati</taxon>
        <taxon>Cyanobacteriota</taxon>
        <taxon>Cyanophyceae</taxon>
        <taxon>Synechococcales</taxon>
        <taxon>Synechococcaceae</taxon>
        <taxon>Synechococcus</taxon>
    </lineage>
</organism>
<feature type="chain" id="PRO_0000302323" description="Large ribosomal subunit protein bL36">
    <location>
        <begin position="1"/>
        <end position="37"/>
    </location>
</feature>
<protein>
    <recommendedName>
        <fullName evidence="1">Large ribosomal subunit protein bL36</fullName>
    </recommendedName>
    <alternativeName>
        <fullName evidence="2">50S ribosomal protein L36</fullName>
    </alternativeName>
</protein>
<accession>A5GIS5</accession>
<comment type="similarity">
    <text evidence="1">Belongs to the bacterial ribosomal protein bL36 family.</text>
</comment>